<comment type="function">
    <text evidence="3 4 5">Transcriptional activator that plays a central role in sensing mycobacterial long-chain fatty acids and regulating lipid biosynthesis (PubMed:23721164, PubMed:32710080, PubMed:33193236). Activates the expression of the genes encoding the fatty acid synthase (fas) and the 4-phosphopantetheinyl transferase (acpS), whose products are involved in the fatty acid and mycolic acid biosynthesis (PubMed:23721164, PubMed:33193236). Specifically binds to three conserved operator sequences present in the fas-acpS promoter region (PubMed:23721164). Not essential for M.tuberculosis viability, although it is required for the optimal growth in vitro and for virulence in macrophages and in a mouse model of infection (PubMed:33193236).</text>
</comment>
<comment type="activity regulation">
    <text evidence="3 4">FasR:DNA binding is regulated by long-chain acyl-CoAs (C14- to C26-CoA), which act as effector molecules that modulate the affinity of FasR for its DNA binding sequences and therefore modulate the expression of the essential fas-acpS operon (PubMed:23721164, PubMed:32710080). FasR activity is not affected by mycolic acid biosynthesis intermediates (PubMed:23721164).</text>
</comment>
<comment type="subunit">
    <text evidence="3 4">Homodimer.</text>
</comment>
<comment type="domain">
    <text evidence="4">Contains an N-terminal helix-turn-helix (HTH) DNA-binding domain and a larger C-terminal regulatory effector-binding domain (EBD) (PubMed:32710080). A long tunnel traverses the entire effector-binding domain, enabling long fatty acyl effectors to bind (PubMed:32710080). When the tunnel is entirely occupied, the protein dimer adopts a rigid configuration with its DNA-binding domains in an open state, leading to DNA dissociation (PubMed:32710080).</text>
</comment>
<comment type="disruption phenotype">
    <text evidence="5">Inactivation of the gene is not lethal for in vitro growth but leads to complete rearrangement of lipid composition of the envelope, with phospholipids, mycolic acids, sulfolipids and phthiocerol dimycocerosates relative abundance severely altered (PubMed:33193236). As a consequence, replication of the mutant strain is impaired in macrophages leading to reduced virulence in a mouse model of infection (PubMed:33193236). The mutant resides in acidified cellular compartments, suggesting that the lipid perturbation caused by the mutation prevents M.tuberculosis inhibition of phagolysosome maturation (PubMed:33193236).</text>
</comment>
<keyword id="KW-0002">3D-structure</keyword>
<keyword id="KW-0010">Activator</keyword>
<keyword id="KW-0238">DNA-binding</keyword>
<keyword id="KW-1185">Reference proteome</keyword>
<keyword id="KW-0804">Transcription</keyword>
<keyword id="KW-0805">Transcription regulation</keyword>
<evidence type="ECO:0000255" key="1">
    <source>
        <dbReference type="PROSITE-ProRule" id="PRU00335"/>
    </source>
</evidence>
<evidence type="ECO:0000256" key="2">
    <source>
        <dbReference type="SAM" id="MobiDB-lite"/>
    </source>
</evidence>
<evidence type="ECO:0000269" key="3">
    <source>
    </source>
</evidence>
<evidence type="ECO:0000269" key="4">
    <source>
    </source>
</evidence>
<evidence type="ECO:0000269" key="5">
    <source>
    </source>
</evidence>
<evidence type="ECO:0000303" key="6">
    <source>
    </source>
</evidence>
<evidence type="ECO:0000305" key="7"/>
<evidence type="ECO:0000312" key="8">
    <source>
        <dbReference type="EMBL" id="CCP46023.1"/>
    </source>
</evidence>
<evidence type="ECO:0007744" key="9">
    <source>
        <dbReference type="PDB" id="6O6N"/>
    </source>
</evidence>
<evidence type="ECO:0007744" key="10">
    <source>
        <dbReference type="PDB" id="6O6O"/>
    </source>
</evidence>
<evidence type="ECO:0007744" key="11">
    <source>
        <dbReference type="PDB" id="6O6P"/>
    </source>
</evidence>
<evidence type="ECO:0007829" key="12">
    <source>
        <dbReference type="PDB" id="6O6O"/>
    </source>
</evidence>
<accession>O05858</accession>
<accession>F2GK79</accession>
<accession>I6Y2X8</accession>
<accession>Q7D5X8</accession>
<name>FASR_MYCTU</name>
<protein>
    <recommendedName>
        <fullName evidence="7">HTH-type transcriptional activator FasR</fullName>
    </recommendedName>
    <alternativeName>
        <fullName evidence="6">Fatty acid synthesis regulator</fullName>
    </alternativeName>
</protein>
<feature type="chain" id="PRO_0000461804" description="HTH-type transcriptional activator FasR">
    <location>
        <begin position="1"/>
        <end position="228"/>
    </location>
</feature>
<feature type="domain" description="HTH tetR-type" evidence="1">
    <location>
        <begin position="38"/>
        <end position="98"/>
    </location>
</feature>
<feature type="DNA-binding region" description="H-T-H motif" evidence="1">
    <location>
        <begin position="61"/>
        <end position="80"/>
    </location>
</feature>
<feature type="region of interest" description="Disordered" evidence="2">
    <location>
        <begin position="1"/>
        <end position="39"/>
    </location>
</feature>
<feature type="mutagenesis site" description="Maintains a normal dimeric structure. Has significantly lower FasR-DNA-dissociation responses to the ligand." evidence="4">
    <original>L</original>
    <variation>A</variation>
    <location>
        <position position="98"/>
    </location>
</feature>
<feature type="mutagenesis site" description="Maintains a normal dimeric structure. Shows dissociation of the protein-DNA complex only at the highest acyl-CoA concentrations." evidence="4">
    <original>L</original>
    <variation>F</variation>
    <location>
        <position position="106"/>
    </location>
</feature>
<feature type="mutagenesis site" description="Maintains a normal dimeric structure. Has significantly lower FasR-DNA-dissociation responses to the ligand." evidence="4">
    <original>F</original>
    <variation>A</variation>
    <location>
        <position position="123"/>
    </location>
</feature>
<feature type="helix" evidence="12">
    <location>
        <begin position="39"/>
        <end position="59"/>
    </location>
</feature>
<feature type="helix" evidence="12">
    <location>
        <begin position="62"/>
        <end position="69"/>
    </location>
</feature>
<feature type="helix" evidence="12">
    <location>
        <begin position="73"/>
        <end position="79"/>
    </location>
</feature>
<feature type="helix" evidence="12">
    <location>
        <begin position="83"/>
        <end position="107"/>
    </location>
</feature>
<feature type="helix" evidence="12">
    <location>
        <begin position="112"/>
        <end position="129"/>
    </location>
</feature>
<feature type="helix" evidence="12">
    <location>
        <begin position="131"/>
        <end position="138"/>
    </location>
</feature>
<feature type="helix" evidence="12">
    <location>
        <begin position="146"/>
        <end position="168"/>
    </location>
</feature>
<feature type="turn" evidence="12">
    <location>
        <begin position="169"/>
        <end position="171"/>
    </location>
</feature>
<feature type="helix" evidence="12">
    <location>
        <begin position="175"/>
        <end position="198"/>
    </location>
</feature>
<feature type="helix" evidence="12">
    <location>
        <begin position="205"/>
        <end position="218"/>
    </location>
</feature>
<feature type="helix" evidence="12">
    <location>
        <begin position="220"/>
        <end position="222"/>
    </location>
</feature>
<sequence length="228" mass="25166">MSDLAKTAQRRALRSSGSARPDEDVPAPNRRGNRLPRDERRGQLLVVASDVFVDRGYHAAGMDEIADRAGVSKPVLYQHFSSKLELYLAVLHRHVENLVSGVHQALSTTTDNRQRLHVAVQAFFDFIEHDSQGYRLIFENDFVTEPEVAAQVRVATESCIDAVFALISADSGLDPHRARMIAVGLVGMSVDCARYWLDADKPISKSDAVEGTVQFAWGGLSHVPLTRS</sequence>
<dbReference type="EMBL" id="AL123456">
    <property type="protein sequence ID" value="CCP46023.1"/>
    <property type="molecule type" value="Genomic_DNA"/>
</dbReference>
<dbReference type="RefSeq" id="NP_217724.1">
    <property type="nucleotide sequence ID" value="NC_000962.3"/>
</dbReference>
<dbReference type="RefSeq" id="WP_003416861.1">
    <property type="nucleotide sequence ID" value="NZ_NVQJ01000003.1"/>
</dbReference>
<dbReference type="PDB" id="6O6N">
    <property type="method" value="X-ray"/>
    <property type="resolution" value="1.70 A"/>
    <property type="chains" value="A=35-225"/>
</dbReference>
<dbReference type="PDB" id="6O6O">
    <property type="method" value="X-ray"/>
    <property type="resolution" value="1.63 A"/>
    <property type="chains" value="A/B=35-225"/>
</dbReference>
<dbReference type="PDB" id="6O6P">
    <property type="method" value="X-ray"/>
    <property type="resolution" value="3.85 A"/>
    <property type="chains" value="A/B=1-228"/>
</dbReference>
<dbReference type="PDBsum" id="6O6N"/>
<dbReference type="PDBsum" id="6O6O"/>
<dbReference type="PDBsum" id="6O6P"/>
<dbReference type="SMR" id="O05858"/>
<dbReference type="STRING" id="83332.Rv3208"/>
<dbReference type="PaxDb" id="83332-Rv3208"/>
<dbReference type="DNASU" id="887905"/>
<dbReference type="GeneID" id="887905"/>
<dbReference type="KEGG" id="mtu:Rv3208"/>
<dbReference type="KEGG" id="mtv:RVBD_3208"/>
<dbReference type="PATRIC" id="fig|83332.111.peg.3581"/>
<dbReference type="TubercuList" id="Rv3208"/>
<dbReference type="eggNOG" id="COG1309">
    <property type="taxonomic scope" value="Bacteria"/>
</dbReference>
<dbReference type="InParanoid" id="O05858"/>
<dbReference type="OrthoDB" id="70491at2"/>
<dbReference type="PhylomeDB" id="O05858"/>
<dbReference type="PHI-base" id="PHI:10876"/>
<dbReference type="Proteomes" id="UP000001584">
    <property type="component" value="Chromosome"/>
</dbReference>
<dbReference type="GO" id="GO:0005886">
    <property type="term" value="C:plasma membrane"/>
    <property type="evidence" value="ECO:0007005"/>
    <property type="project" value="MTBBASE"/>
</dbReference>
<dbReference type="GO" id="GO:0003700">
    <property type="term" value="F:DNA-binding transcription factor activity"/>
    <property type="evidence" value="ECO:0000318"/>
    <property type="project" value="GO_Central"/>
</dbReference>
<dbReference type="GO" id="GO:0000976">
    <property type="term" value="F:transcription cis-regulatory region binding"/>
    <property type="evidence" value="ECO:0000318"/>
    <property type="project" value="GO_Central"/>
</dbReference>
<dbReference type="GO" id="GO:0006355">
    <property type="term" value="P:regulation of DNA-templated transcription"/>
    <property type="evidence" value="ECO:0000318"/>
    <property type="project" value="GO_Central"/>
</dbReference>
<dbReference type="FunFam" id="1.10.10.60:FF:000141">
    <property type="entry name" value="TetR family transcriptional regulator"/>
    <property type="match status" value="1"/>
</dbReference>
<dbReference type="FunFam" id="1.10.357.10:FF:000016">
    <property type="entry name" value="TetR family transcriptional regulator"/>
    <property type="match status" value="1"/>
</dbReference>
<dbReference type="Gene3D" id="1.10.357.10">
    <property type="entry name" value="Tetracycline Repressor, domain 2"/>
    <property type="match status" value="1"/>
</dbReference>
<dbReference type="InterPro" id="IPR054129">
    <property type="entry name" value="DesT_TetR_C"/>
</dbReference>
<dbReference type="InterPro" id="IPR009057">
    <property type="entry name" value="Homeodomain-like_sf"/>
</dbReference>
<dbReference type="InterPro" id="IPR050109">
    <property type="entry name" value="HTH-type_TetR-like_transc_reg"/>
</dbReference>
<dbReference type="InterPro" id="IPR001647">
    <property type="entry name" value="HTH_TetR"/>
</dbReference>
<dbReference type="InterPro" id="IPR036271">
    <property type="entry name" value="Tet_transcr_reg_TetR-rel_C_sf"/>
</dbReference>
<dbReference type="PANTHER" id="PTHR30055">
    <property type="entry name" value="HTH-TYPE TRANSCRIPTIONAL REGULATOR RUTR"/>
    <property type="match status" value="1"/>
</dbReference>
<dbReference type="PANTHER" id="PTHR30055:SF160">
    <property type="entry name" value="TRANSCRIPTIONAL REGULATORY PROTEIN (PROBABLY ASNC-FAMILY)-RELATED"/>
    <property type="match status" value="1"/>
</dbReference>
<dbReference type="Pfam" id="PF21943">
    <property type="entry name" value="TetR_C_46"/>
    <property type="match status" value="1"/>
</dbReference>
<dbReference type="Pfam" id="PF00440">
    <property type="entry name" value="TetR_N"/>
    <property type="match status" value="1"/>
</dbReference>
<dbReference type="PRINTS" id="PR00455">
    <property type="entry name" value="HTHTETR"/>
</dbReference>
<dbReference type="SUPFAM" id="SSF46689">
    <property type="entry name" value="Homeodomain-like"/>
    <property type="match status" value="1"/>
</dbReference>
<dbReference type="SUPFAM" id="SSF48498">
    <property type="entry name" value="Tetracyclin repressor-like, C-terminal domain"/>
    <property type="match status" value="1"/>
</dbReference>
<dbReference type="PROSITE" id="PS50977">
    <property type="entry name" value="HTH_TETR_2"/>
    <property type="match status" value="1"/>
</dbReference>
<reference key="1">
    <citation type="journal article" date="1998" name="Nature">
        <title>Deciphering the biology of Mycobacterium tuberculosis from the complete genome sequence.</title>
        <authorList>
            <person name="Cole S.T."/>
            <person name="Brosch R."/>
            <person name="Parkhill J."/>
            <person name="Garnier T."/>
            <person name="Churcher C.M."/>
            <person name="Harris D.E."/>
            <person name="Gordon S.V."/>
            <person name="Eiglmeier K."/>
            <person name="Gas S."/>
            <person name="Barry C.E. III"/>
            <person name="Tekaia F."/>
            <person name="Badcock K."/>
            <person name="Basham D."/>
            <person name="Brown D."/>
            <person name="Chillingworth T."/>
            <person name="Connor R."/>
            <person name="Davies R.M."/>
            <person name="Devlin K."/>
            <person name="Feltwell T."/>
            <person name="Gentles S."/>
            <person name="Hamlin N."/>
            <person name="Holroyd S."/>
            <person name="Hornsby T."/>
            <person name="Jagels K."/>
            <person name="Krogh A."/>
            <person name="McLean J."/>
            <person name="Moule S."/>
            <person name="Murphy L.D."/>
            <person name="Oliver S."/>
            <person name="Osborne J."/>
            <person name="Quail M.A."/>
            <person name="Rajandream M.A."/>
            <person name="Rogers J."/>
            <person name="Rutter S."/>
            <person name="Seeger K."/>
            <person name="Skelton S."/>
            <person name="Squares S."/>
            <person name="Squares R."/>
            <person name="Sulston J.E."/>
            <person name="Taylor K."/>
            <person name="Whitehead S."/>
            <person name="Barrell B.G."/>
        </authorList>
    </citation>
    <scope>NUCLEOTIDE SEQUENCE [LARGE SCALE GENOMIC DNA]</scope>
    <source>
        <strain>ATCC 25618 / H37Rv</strain>
    </source>
</reference>
<reference key="2">
    <citation type="journal article" date="2011" name="Mol. Cell. Proteomics">
        <title>Proteogenomic analysis of Mycobacterium tuberculosis by high resolution mass spectrometry.</title>
        <authorList>
            <person name="Kelkar D.S."/>
            <person name="Kumar D."/>
            <person name="Kumar P."/>
            <person name="Balakrishnan L."/>
            <person name="Muthusamy B."/>
            <person name="Yadav A.K."/>
            <person name="Shrivastava P."/>
            <person name="Marimuthu A."/>
            <person name="Anand S."/>
            <person name="Sundaram H."/>
            <person name="Kingsbury R."/>
            <person name="Harsha H.C."/>
            <person name="Nair B."/>
            <person name="Prasad T.S."/>
            <person name="Chauhan D.S."/>
            <person name="Katoch K."/>
            <person name="Katoch V.M."/>
            <person name="Kumar P."/>
            <person name="Chaerkady R."/>
            <person name="Ramachandran S."/>
            <person name="Dash D."/>
            <person name="Pandey A."/>
        </authorList>
    </citation>
    <scope>IDENTIFICATION BY MASS SPECTROMETRY [LARGE SCALE ANALYSIS]</scope>
    <source>
        <strain>ATCC 25618 / H37Rv</strain>
    </source>
</reference>
<reference key="3">
    <citation type="journal article" date="2013" name="Mol. Microbiol.">
        <title>Transcriptional regulation of fatty acid biosynthesis in mycobacteria.</title>
        <authorList>
            <person name="Mondino S."/>
            <person name="Gago G."/>
            <person name="Gramajo H."/>
        </authorList>
    </citation>
    <scope>FUNCTION</scope>
    <scope>DNA-BINDING</scope>
    <scope>ACTIVITY REGULATION</scope>
    <scope>SUBUNIT</scope>
    <source>
        <strain>H37Rv</strain>
    </source>
</reference>
<reference key="4">
    <citation type="journal article" date="2020" name="Front. Microbiol.">
        <title>FasR Regulates Fatty Acid Biosynthesis and Is Essential for Virulence of Mycobacterium tuberculosis.</title>
        <authorList>
            <person name="Mondino S."/>
            <person name="Vazquez C.L."/>
            <person name="Cabruja M."/>
            <person name="Sala C."/>
            <person name="Cazenave-Gassiot A."/>
            <person name="Blanco F.C."/>
            <person name="Wenk M.R."/>
            <person name="Bigi F."/>
            <person name="Cole S.T."/>
            <person name="Gramajo H."/>
            <person name="Gago G."/>
        </authorList>
    </citation>
    <scope>FUNCTION</scope>
    <scope>DISRUPTION PHENOTYPE</scope>
    <source>
        <strain>H37Rv</strain>
    </source>
</reference>
<reference evidence="9 10 11" key="5">
    <citation type="journal article" date="2020" name="Nat. Commun.">
        <title>Mycobacterium tuberculosis FasR senses long fatty acyl-CoA through a tunnel and a hydrophobic transmission spine.</title>
        <authorList>
            <person name="Lara J."/>
            <person name="Diacovich L."/>
            <person name="Trajtenberg F."/>
            <person name="Larrieux N."/>
            <person name="Malchiodi E.L."/>
            <person name="Fernandez M.M."/>
            <person name="Gago G."/>
            <person name="Gramajo H."/>
            <person name="Buschiazzo A."/>
        </authorList>
    </citation>
    <scope>X-RAY CRYSTALLOGRAPHY (1.63 ANGSTROMS) IN COMPLEX WITH ACYL EFFECTOR LIGANDS AND DNA</scope>
    <scope>FUNCTION</scope>
    <scope>ACTIVITY REGULATION</scope>
    <scope>SUBUNIT</scope>
    <scope>DOMAIN</scope>
    <scope>MUTAGENESIS OF LEU-98; LEU-106 AND PHE-123</scope>
    <source>
        <strain>H37Rv</strain>
    </source>
</reference>
<proteinExistence type="evidence at protein level"/>
<organism>
    <name type="scientific">Mycobacterium tuberculosis (strain ATCC 25618 / H37Rv)</name>
    <dbReference type="NCBI Taxonomy" id="83332"/>
    <lineage>
        <taxon>Bacteria</taxon>
        <taxon>Bacillati</taxon>
        <taxon>Actinomycetota</taxon>
        <taxon>Actinomycetes</taxon>
        <taxon>Mycobacteriales</taxon>
        <taxon>Mycobacteriaceae</taxon>
        <taxon>Mycobacterium</taxon>
        <taxon>Mycobacterium tuberculosis complex</taxon>
    </lineage>
</organism>
<gene>
    <name evidence="6" type="primary">fasR</name>
    <name evidence="8" type="ordered locus">Rv3208</name>
</gene>